<proteinExistence type="inferred from homology"/>
<dbReference type="EMBL" id="CH902617">
    <property type="protein sequence ID" value="EDV44293.1"/>
    <property type="molecule type" value="Genomic_DNA"/>
</dbReference>
<dbReference type="SMR" id="B3M123"/>
<dbReference type="FunCoup" id="B3M123">
    <property type="interactions" value="2225"/>
</dbReference>
<dbReference type="STRING" id="7217.B3M123"/>
<dbReference type="EnsemblMetazoa" id="FBtr0120795">
    <property type="protein sequence ID" value="FBpp0119287"/>
    <property type="gene ID" value="FBgn0093117"/>
</dbReference>
<dbReference type="EnsemblMetazoa" id="XM_001955696.4">
    <property type="protein sequence ID" value="XP_001955732.1"/>
    <property type="gene ID" value="LOC6498892"/>
</dbReference>
<dbReference type="GeneID" id="6498892"/>
<dbReference type="KEGG" id="dan:6498892"/>
<dbReference type="CTD" id="40587"/>
<dbReference type="eggNOG" id="KOG2975">
    <property type="taxonomic scope" value="Eukaryota"/>
</dbReference>
<dbReference type="HOGENOM" id="CLU_027018_0_1_1"/>
<dbReference type="InParanoid" id="B3M123"/>
<dbReference type="OMA" id="EYFVHFH"/>
<dbReference type="OrthoDB" id="25498at2759"/>
<dbReference type="PhylomeDB" id="B3M123"/>
<dbReference type="Proteomes" id="UP000007801">
    <property type="component" value="Unassembled WGS sequence"/>
</dbReference>
<dbReference type="GO" id="GO:0016282">
    <property type="term" value="C:eukaryotic 43S preinitiation complex"/>
    <property type="evidence" value="ECO:0007669"/>
    <property type="project" value="UniProtKB-UniRule"/>
</dbReference>
<dbReference type="GO" id="GO:0033290">
    <property type="term" value="C:eukaryotic 48S preinitiation complex"/>
    <property type="evidence" value="ECO:0007669"/>
    <property type="project" value="UniProtKB-UniRule"/>
</dbReference>
<dbReference type="GO" id="GO:0071541">
    <property type="term" value="C:eukaryotic translation initiation factor 3 complex, eIF3m"/>
    <property type="evidence" value="ECO:0007669"/>
    <property type="project" value="TreeGrafter"/>
</dbReference>
<dbReference type="GO" id="GO:0140492">
    <property type="term" value="F:metal-dependent deubiquitinase activity"/>
    <property type="evidence" value="ECO:0007669"/>
    <property type="project" value="EnsemblMetazoa"/>
</dbReference>
<dbReference type="GO" id="GO:0003743">
    <property type="term" value="F:translation initiation factor activity"/>
    <property type="evidence" value="ECO:0007669"/>
    <property type="project" value="UniProtKB-UniRule"/>
</dbReference>
<dbReference type="GO" id="GO:0031369">
    <property type="term" value="F:translation initiation factor binding"/>
    <property type="evidence" value="ECO:0007669"/>
    <property type="project" value="InterPro"/>
</dbReference>
<dbReference type="GO" id="GO:0140367">
    <property type="term" value="P:antibacterial innate immune response"/>
    <property type="evidence" value="ECO:0007669"/>
    <property type="project" value="EnsemblMetazoa"/>
</dbReference>
<dbReference type="GO" id="GO:0050829">
    <property type="term" value="P:defense response to Gram-negative bacterium"/>
    <property type="evidence" value="ECO:0007669"/>
    <property type="project" value="EnsemblMetazoa"/>
</dbReference>
<dbReference type="GO" id="GO:0001732">
    <property type="term" value="P:formation of cytoplasmic translation initiation complex"/>
    <property type="evidence" value="ECO:0007669"/>
    <property type="project" value="UniProtKB-UniRule"/>
</dbReference>
<dbReference type="GO" id="GO:0045747">
    <property type="term" value="P:positive regulation of Notch signaling pathway"/>
    <property type="evidence" value="ECO:0007669"/>
    <property type="project" value="EnsemblMetazoa"/>
</dbReference>
<dbReference type="GO" id="GO:0061059">
    <property type="term" value="P:positive regulation of peptidoglycan recognition protein signaling pathway"/>
    <property type="evidence" value="ECO:0007669"/>
    <property type="project" value="EnsemblMetazoa"/>
</dbReference>
<dbReference type="CDD" id="cd08064">
    <property type="entry name" value="MPN_eIF3f"/>
    <property type="match status" value="1"/>
</dbReference>
<dbReference type="FunFam" id="3.40.140.10:FF:000014">
    <property type="entry name" value="Eukaryotic translation initiation factor 3 subunit F"/>
    <property type="match status" value="1"/>
</dbReference>
<dbReference type="Gene3D" id="3.40.140.10">
    <property type="entry name" value="Cytidine Deaminase, domain 2"/>
    <property type="match status" value="1"/>
</dbReference>
<dbReference type="HAMAP" id="MF_03005">
    <property type="entry name" value="eIF3f"/>
    <property type="match status" value="1"/>
</dbReference>
<dbReference type="InterPro" id="IPR027531">
    <property type="entry name" value="eIF3f"/>
</dbReference>
<dbReference type="InterPro" id="IPR024969">
    <property type="entry name" value="EIF3F/CSN6-like_C"/>
</dbReference>
<dbReference type="InterPro" id="IPR000555">
    <property type="entry name" value="JAMM/MPN+_dom"/>
</dbReference>
<dbReference type="InterPro" id="IPR037518">
    <property type="entry name" value="MPN"/>
</dbReference>
<dbReference type="PANTHER" id="PTHR10540:SF6">
    <property type="entry name" value="EUKARYOTIC TRANSLATION INITIATION FACTOR 3 SUBUNIT F"/>
    <property type="match status" value="1"/>
</dbReference>
<dbReference type="PANTHER" id="PTHR10540">
    <property type="entry name" value="EUKARYOTIC TRANSLATION INITIATION FACTOR 3 SUBUNIT F-RELATED"/>
    <property type="match status" value="1"/>
</dbReference>
<dbReference type="Pfam" id="PF01398">
    <property type="entry name" value="JAB"/>
    <property type="match status" value="1"/>
</dbReference>
<dbReference type="Pfam" id="PF13012">
    <property type="entry name" value="MitMem_reg"/>
    <property type="match status" value="1"/>
</dbReference>
<dbReference type="SMART" id="SM00232">
    <property type="entry name" value="JAB_MPN"/>
    <property type="match status" value="1"/>
</dbReference>
<dbReference type="PROSITE" id="PS50249">
    <property type="entry name" value="MPN"/>
    <property type="match status" value="1"/>
</dbReference>
<reference key="1">
    <citation type="journal article" date="2007" name="Nature">
        <title>Evolution of genes and genomes on the Drosophila phylogeny.</title>
        <authorList>
            <consortium name="Drosophila 12 genomes consortium"/>
        </authorList>
    </citation>
    <scope>NUCLEOTIDE SEQUENCE [LARGE SCALE GENOMIC DNA]</scope>
    <source>
        <strain>Tucson 14024-0371.13</strain>
    </source>
</reference>
<evidence type="ECO:0000255" key="1">
    <source>
        <dbReference type="HAMAP-Rule" id="MF_03005"/>
    </source>
</evidence>
<evidence type="ECO:0000255" key="2">
    <source>
        <dbReference type="PROSITE-ProRule" id="PRU01182"/>
    </source>
</evidence>
<feature type="chain" id="PRO_0000364297" description="Eukaryotic translation initiation factor 3 subunit F-1">
    <location>
        <begin position="1"/>
        <end position="280"/>
    </location>
</feature>
<feature type="domain" description="MPN" evidence="2">
    <location>
        <begin position="8"/>
        <end position="138"/>
    </location>
</feature>
<sequence length="280" mass="31185">MSALNLTVRVHPVVLFQVVDAYERRNADSHRVIGTLLGSVDKGVVEVTNCFCVPHKEHDDQVEAELSYALDMYDLNRKVNPNESVVGWWATGNDVTNHSSVIHEYYARECNNPVHLTVDTSLQGGRMGLRAYVCIQLGVPGGKSGCMFTPIPVELTSYEPETFGLKLLQKTVGVSPAHRPKTVPPMLDLAQISEASQKLQQLLDLILKYVDDVIAHKVTPDNAVGRQLLDLIHSVPHMTHEQFTQMFNANVRNLLLVITLSQLIKTQLQLNEKLTFLPSA</sequence>
<organism>
    <name type="scientific">Drosophila ananassae</name>
    <name type="common">Fruit fly</name>
    <dbReference type="NCBI Taxonomy" id="7217"/>
    <lineage>
        <taxon>Eukaryota</taxon>
        <taxon>Metazoa</taxon>
        <taxon>Ecdysozoa</taxon>
        <taxon>Arthropoda</taxon>
        <taxon>Hexapoda</taxon>
        <taxon>Insecta</taxon>
        <taxon>Pterygota</taxon>
        <taxon>Neoptera</taxon>
        <taxon>Endopterygota</taxon>
        <taxon>Diptera</taxon>
        <taxon>Brachycera</taxon>
        <taxon>Muscomorpha</taxon>
        <taxon>Ephydroidea</taxon>
        <taxon>Drosophilidae</taxon>
        <taxon>Drosophila</taxon>
        <taxon>Sophophora</taxon>
    </lineage>
</organism>
<comment type="function">
    <text evidence="1">Component of the eukaryotic translation initiation factor 3 (eIF-3) complex, which is involved in protein synthesis of a specialized repertoire of mRNAs and, together with other initiation factors, stimulates binding of mRNA and methionyl-tRNAi to the 40S ribosome. The eIF-3 complex specifically targets and initiates translation of a subset of mRNAs involved in cell proliferation.</text>
</comment>
<comment type="subunit">
    <text evidence="1">Component of the eukaryotic translation initiation factor 3 (eIF-3) complex. The eIF-3 complex interacts with pix.</text>
</comment>
<comment type="subcellular location">
    <subcellularLocation>
        <location evidence="1">Cytoplasm</location>
    </subcellularLocation>
</comment>
<comment type="similarity">
    <text evidence="1">Belongs to the eIF-3 subunit F family.</text>
</comment>
<gene>
    <name evidence="1" type="primary">eIF3f1</name>
    <name evidence="1" type="synonym">eIF3-S5-1</name>
    <name type="ORF">GF16095</name>
</gene>
<keyword id="KW-0963">Cytoplasm</keyword>
<keyword id="KW-0396">Initiation factor</keyword>
<keyword id="KW-0648">Protein biosynthesis</keyword>
<keyword id="KW-1185">Reference proteome</keyword>
<protein>
    <recommendedName>
        <fullName evidence="1">Eukaryotic translation initiation factor 3 subunit F-1</fullName>
        <shortName evidence="1">eIF3f-1</shortName>
    </recommendedName>
    <alternativeName>
        <fullName evidence="1">Eukaryotic translation initiation factor 3 subunit 5-1</fullName>
    </alternativeName>
</protein>
<name>EI3F1_DROAN</name>
<accession>B3M123</accession>